<reference key="1">
    <citation type="journal article" date="2004" name="Nat. Biotechnol.">
        <title>The genome sequence of the extreme thermophile Thermus thermophilus.</title>
        <authorList>
            <person name="Henne A."/>
            <person name="Brueggemann H."/>
            <person name="Raasch C."/>
            <person name="Wiezer A."/>
            <person name="Hartsch T."/>
            <person name="Liesegang H."/>
            <person name="Johann A."/>
            <person name="Lienard T."/>
            <person name="Gohl O."/>
            <person name="Martinez-Arias R."/>
            <person name="Jacobi C."/>
            <person name="Starkuviene V."/>
            <person name="Schlenczeck S."/>
            <person name="Dencker S."/>
            <person name="Huber R."/>
            <person name="Klenk H.-P."/>
            <person name="Kramer W."/>
            <person name="Merkl R."/>
            <person name="Gottschalk G."/>
            <person name="Fritz H.-J."/>
        </authorList>
    </citation>
    <scope>NUCLEOTIDE SEQUENCE [LARGE SCALE GENOMIC DNA]</scope>
    <source>
        <strain>ATCC BAA-163 / DSM 7039 / HB27</strain>
    </source>
</reference>
<comment type="function">
    <text evidence="1">One of the primary rRNA binding proteins, this protein initially binds near the 5'-end of the 23S rRNA. It is important during the early stages of 50S assembly. It makes multiple contacts with different domains of the 23S rRNA in the assembled 50S subunit and ribosome.</text>
</comment>
<comment type="function">
    <text evidence="1">Forms part of the polypeptide exit tunnel.</text>
</comment>
<comment type="subunit">
    <text>Part of the 50S ribosomal subunit.</text>
</comment>
<comment type="similarity">
    <text evidence="1">Belongs to the universal ribosomal protein uL4 family.</text>
</comment>
<feature type="chain" id="PRO_0000242455" description="Large ribosomal subunit protein uL4">
    <location>
        <begin position="1"/>
        <end position="205"/>
    </location>
</feature>
<feature type="strand" evidence="3">
    <location>
        <begin position="4"/>
        <end position="6"/>
    </location>
</feature>
<feature type="strand" evidence="7">
    <location>
        <begin position="13"/>
        <end position="15"/>
    </location>
</feature>
<feature type="helix" evidence="3">
    <location>
        <begin position="25"/>
        <end position="38"/>
    </location>
</feature>
<feature type="strand" evidence="3">
    <location>
        <begin position="48"/>
        <end position="51"/>
    </location>
</feature>
<feature type="strand" evidence="5">
    <location>
        <begin position="52"/>
        <end position="54"/>
    </location>
</feature>
<feature type="strand" evidence="3">
    <location>
        <begin position="62"/>
        <end position="65"/>
    </location>
</feature>
<feature type="strand" evidence="5">
    <location>
        <begin position="73"/>
        <end position="75"/>
    </location>
</feature>
<feature type="strand" evidence="4">
    <location>
        <begin position="78"/>
        <end position="81"/>
    </location>
</feature>
<feature type="strand" evidence="3">
    <location>
        <begin position="83"/>
        <end position="85"/>
    </location>
</feature>
<feature type="helix" evidence="3">
    <location>
        <begin position="98"/>
        <end position="115"/>
    </location>
</feature>
<feature type="strand" evidence="3">
    <location>
        <begin position="118"/>
        <end position="121"/>
    </location>
</feature>
<feature type="turn" evidence="6">
    <location>
        <begin position="125"/>
        <end position="129"/>
    </location>
</feature>
<feature type="helix" evidence="3">
    <location>
        <begin position="131"/>
        <end position="139"/>
    </location>
</feature>
<feature type="turn" evidence="3">
    <location>
        <begin position="140"/>
        <end position="142"/>
    </location>
</feature>
<feature type="strand" evidence="3">
    <location>
        <begin position="145"/>
        <end position="147"/>
    </location>
</feature>
<feature type="strand" evidence="3">
    <location>
        <begin position="149"/>
        <end position="152"/>
    </location>
</feature>
<feature type="helix" evidence="3">
    <location>
        <begin position="156"/>
        <end position="164"/>
    </location>
</feature>
<feature type="strand" evidence="3">
    <location>
        <begin position="168"/>
        <end position="171"/>
    </location>
</feature>
<feature type="helix" evidence="4">
    <location>
        <begin position="173"/>
        <end position="175"/>
    </location>
</feature>
<feature type="helix" evidence="3">
    <location>
        <begin position="178"/>
        <end position="181"/>
    </location>
</feature>
<feature type="strand" evidence="3">
    <location>
        <begin position="184"/>
        <end position="190"/>
    </location>
</feature>
<feature type="helix" evidence="3">
    <location>
        <begin position="191"/>
        <end position="200"/>
    </location>
</feature>
<organism>
    <name type="scientific">Thermus thermophilus (strain ATCC BAA-163 / DSM 7039 / HB27)</name>
    <dbReference type="NCBI Taxonomy" id="262724"/>
    <lineage>
        <taxon>Bacteria</taxon>
        <taxon>Thermotogati</taxon>
        <taxon>Deinococcota</taxon>
        <taxon>Deinococci</taxon>
        <taxon>Thermales</taxon>
        <taxon>Thermaceae</taxon>
        <taxon>Thermus</taxon>
    </lineage>
</organism>
<keyword id="KW-0002">3D-structure</keyword>
<keyword id="KW-0687">Ribonucleoprotein</keyword>
<keyword id="KW-0689">Ribosomal protein</keyword>
<keyword id="KW-0694">RNA-binding</keyword>
<keyword id="KW-0699">rRNA-binding</keyword>
<sequence>MYQIPVLSPSGRRELAADLPAEINPHLLWEVVRWQLAKRRRGTASTKTRGEVAYSGRKIWPQKHTGRARHGDIGAPIFVGGGVVFGPKPRDYSYTLPKKVRKKGLAMAVADRAREGKLLLVEAFAGVNGKTKEFLAWAKEAGLDGSESVLLVTGNELVRRAARNLPWVVTLAPEGLNVYDIVRTERLVMDLDAWEVFQNRIGGEA</sequence>
<dbReference type="EMBL" id="AE017221">
    <property type="protein sequence ID" value="AAS81669.1"/>
    <property type="molecule type" value="Genomic_DNA"/>
</dbReference>
<dbReference type="RefSeq" id="WP_011173713.1">
    <property type="nucleotide sequence ID" value="NC_005835.1"/>
</dbReference>
<dbReference type="PDB" id="4V4I">
    <property type="method" value="X-ray"/>
    <property type="resolution" value="3.71 A"/>
    <property type="chains" value="D=1-205"/>
</dbReference>
<dbReference type="PDB" id="4V4J">
    <property type="method" value="X-ray"/>
    <property type="resolution" value="3.83 A"/>
    <property type="chains" value="D=1-205"/>
</dbReference>
<dbReference type="PDB" id="4V63">
    <property type="method" value="X-ray"/>
    <property type="resolution" value="3.21 A"/>
    <property type="chains" value="BF/DF=1-205"/>
</dbReference>
<dbReference type="PDB" id="4V67">
    <property type="method" value="X-ray"/>
    <property type="resolution" value="3.00 A"/>
    <property type="chains" value="BF/DF=1-205"/>
</dbReference>
<dbReference type="PDB" id="4V7P">
    <property type="method" value="X-ray"/>
    <property type="resolution" value="3.62 A"/>
    <property type="chains" value="BE/CE=1-205"/>
</dbReference>
<dbReference type="PDB" id="4V83">
    <property type="method" value="X-ray"/>
    <property type="resolution" value="3.50 A"/>
    <property type="chains" value="BE/DE=1-202"/>
</dbReference>
<dbReference type="PDB" id="4V84">
    <property type="method" value="X-ray"/>
    <property type="resolution" value="3.40 A"/>
    <property type="chains" value="BE/DE=1-202"/>
</dbReference>
<dbReference type="PDB" id="4V9J">
    <property type="method" value="X-ray"/>
    <property type="resolution" value="3.86 A"/>
    <property type="chains" value="BF/DF=1-203"/>
</dbReference>
<dbReference type="PDB" id="4V9K">
    <property type="method" value="X-ray"/>
    <property type="resolution" value="3.50 A"/>
    <property type="chains" value="BF/DF=1-203"/>
</dbReference>
<dbReference type="PDB" id="4V9L">
    <property type="method" value="X-ray"/>
    <property type="resolution" value="3.50 A"/>
    <property type="chains" value="BF/DF=1-203"/>
</dbReference>
<dbReference type="PDB" id="4V9M">
    <property type="method" value="X-ray"/>
    <property type="resolution" value="4.00 A"/>
    <property type="chains" value="BF/DF=1-203"/>
</dbReference>
<dbReference type="PDB" id="4V9N">
    <property type="method" value="X-ray"/>
    <property type="resolution" value="3.40 A"/>
    <property type="chains" value="BF/DF=1-202"/>
</dbReference>
<dbReference type="PDB" id="4V9Q">
    <property type="method" value="X-ray"/>
    <property type="resolution" value="3.40 A"/>
    <property type="chains" value="AF/CF=1-202"/>
</dbReference>
<dbReference type="PDB" id="4W29">
    <property type="method" value="X-ray"/>
    <property type="resolution" value="3.80 A"/>
    <property type="chains" value="BF/DF=1-203"/>
</dbReference>
<dbReference type="PDB" id="4XEJ">
    <property type="method" value="X-ray"/>
    <property type="resolution" value="3.80 A"/>
    <property type="chains" value="AL04/BL04=1-202"/>
</dbReference>
<dbReference type="PDB" id="5J4D">
    <property type="method" value="X-ray"/>
    <property type="resolution" value="3.10 A"/>
    <property type="chains" value="G/LB=1-205"/>
</dbReference>
<dbReference type="PDB" id="6B4V">
    <property type="method" value="X-ray"/>
    <property type="resolution" value="3.40 A"/>
    <property type="chains" value="G/KB=1-205"/>
</dbReference>
<dbReference type="PDB" id="6BOH">
    <property type="method" value="X-ray"/>
    <property type="resolution" value="3.40 A"/>
    <property type="chains" value="G/LB=1-205"/>
</dbReference>
<dbReference type="PDB" id="6BOK">
    <property type="method" value="X-ray"/>
    <property type="resolution" value="3.55 A"/>
    <property type="chains" value="G/JB=1-205"/>
</dbReference>
<dbReference type="PDB" id="6N1D">
    <property type="method" value="X-ray"/>
    <property type="resolution" value="3.20 A"/>
    <property type="chains" value="AL04/BL04=1-205"/>
</dbReference>
<dbReference type="PDBsum" id="4V4I"/>
<dbReference type="PDBsum" id="4V4J"/>
<dbReference type="PDBsum" id="4V63"/>
<dbReference type="PDBsum" id="4V67"/>
<dbReference type="PDBsum" id="4V7P"/>
<dbReference type="PDBsum" id="4V83"/>
<dbReference type="PDBsum" id="4V84"/>
<dbReference type="PDBsum" id="4V9J"/>
<dbReference type="PDBsum" id="4V9K"/>
<dbReference type="PDBsum" id="4V9L"/>
<dbReference type="PDBsum" id="4V9M"/>
<dbReference type="PDBsum" id="4V9N"/>
<dbReference type="PDBsum" id="4V9Q"/>
<dbReference type="PDBsum" id="4W29"/>
<dbReference type="PDBsum" id="4XEJ"/>
<dbReference type="PDBsum" id="5J4D"/>
<dbReference type="PDBsum" id="6B4V"/>
<dbReference type="PDBsum" id="6BOH"/>
<dbReference type="PDBsum" id="6BOK"/>
<dbReference type="PDBsum" id="6N1D"/>
<dbReference type="SMR" id="Q72I05"/>
<dbReference type="IntAct" id="Q72I05">
    <property type="interactions" value="4"/>
</dbReference>
<dbReference type="GeneID" id="3167923"/>
<dbReference type="KEGG" id="tth:TT_C1327"/>
<dbReference type="eggNOG" id="COG0088">
    <property type="taxonomic scope" value="Bacteria"/>
</dbReference>
<dbReference type="HOGENOM" id="CLU_041575_5_1_0"/>
<dbReference type="OrthoDB" id="9803201at2"/>
<dbReference type="Proteomes" id="UP000000592">
    <property type="component" value="Chromosome"/>
</dbReference>
<dbReference type="GO" id="GO:1990904">
    <property type="term" value="C:ribonucleoprotein complex"/>
    <property type="evidence" value="ECO:0007669"/>
    <property type="project" value="UniProtKB-KW"/>
</dbReference>
<dbReference type="GO" id="GO:0005840">
    <property type="term" value="C:ribosome"/>
    <property type="evidence" value="ECO:0007669"/>
    <property type="project" value="UniProtKB-KW"/>
</dbReference>
<dbReference type="GO" id="GO:0019843">
    <property type="term" value="F:rRNA binding"/>
    <property type="evidence" value="ECO:0007669"/>
    <property type="project" value="UniProtKB-UniRule"/>
</dbReference>
<dbReference type="GO" id="GO:0003735">
    <property type="term" value="F:structural constituent of ribosome"/>
    <property type="evidence" value="ECO:0007669"/>
    <property type="project" value="InterPro"/>
</dbReference>
<dbReference type="GO" id="GO:0006412">
    <property type="term" value="P:translation"/>
    <property type="evidence" value="ECO:0007669"/>
    <property type="project" value="UniProtKB-UniRule"/>
</dbReference>
<dbReference type="Gene3D" id="3.40.1370.10">
    <property type="match status" value="1"/>
</dbReference>
<dbReference type="HAMAP" id="MF_01328_B">
    <property type="entry name" value="Ribosomal_uL4_B"/>
    <property type="match status" value="1"/>
</dbReference>
<dbReference type="InterPro" id="IPR002136">
    <property type="entry name" value="Ribosomal_uL4"/>
</dbReference>
<dbReference type="InterPro" id="IPR013005">
    <property type="entry name" value="Ribosomal_uL4-like"/>
</dbReference>
<dbReference type="InterPro" id="IPR023574">
    <property type="entry name" value="Ribosomal_uL4_dom_sf"/>
</dbReference>
<dbReference type="NCBIfam" id="TIGR03953">
    <property type="entry name" value="rplD_bact"/>
    <property type="match status" value="1"/>
</dbReference>
<dbReference type="PANTHER" id="PTHR10746">
    <property type="entry name" value="50S RIBOSOMAL PROTEIN L4"/>
    <property type="match status" value="1"/>
</dbReference>
<dbReference type="PANTHER" id="PTHR10746:SF6">
    <property type="entry name" value="LARGE RIBOSOMAL SUBUNIT PROTEIN UL4M"/>
    <property type="match status" value="1"/>
</dbReference>
<dbReference type="Pfam" id="PF00573">
    <property type="entry name" value="Ribosomal_L4"/>
    <property type="match status" value="1"/>
</dbReference>
<dbReference type="SUPFAM" id="SSF52166">
    <property type="entry name" value="Ribosomal protein L4"/>
    <property type="match status" value="1"/>
</dbReference>
<accession>Q72I05</accession>
<evidence type="ECO:0000255" key="1">
    <source>
        <dbReference type="HAMAP-Rule" id="MF_01328"/>
    </source>
</evidence>
<evidence type="ECO:0000305" key="2"/>
<evidence type="ECO:0007829" key="3">
    <source>
        <dbReference type="PDB" id="4V63"/>
    </source>
</evidence>
<evidence type="ECO:0007829" key="4">
    <source>
        <dbReference type="PDB" id="4V84"/>
    </source>
</evidence>
<evidence type="ECO:0007829" key="5">
    <source>
        <dbReference type="PDB" id="4V9K"/>
    </source>
</evidence>
<evidence type="ECO:0007829" key="6">
    <source>
        <dbReference type="PDB" id="4V9L"/>
    </source>
</evidence>
<evidence type="ECO:0007829" key="7">
    <source>
        <dbReference type="PDB" id="4V9N"/>
    </source>
</evidence>
<gene>
    <name evidence="1" type="primary">rplD</name>
    <name type="ordered locus">TT_C1327</name>
</gene>
<name>RL4_THET2</name>
<proteinExistence type="evidence at protein level"/>
<protein>
    <recommendedName>
        <fullName evidence="1">Large ribosomal subunit protein uL4</fullName>
    </recommendedName>
    <alternativeName>
        <fullName evidence="2">50S ribosomal protein L4</fullName>
    </alternativeName>
</protein>